<feature type="chain" id="PRO_0000326630" description="Interactor protein for cytohesin exchange factors 1">
    <location>
        <begin position="1"/>
        <end position="437"/>
    </location>
</feature>
<feature type="domain" description="PH" evidence="2">
    <location>
        <begin position="41"/>
        <end position="140"/>
    </location>
</feature>
<feature type="region of interest" description="Disordered" evidence="3">
    <location>
        <begin position="143"/>
        <end position="225"/>
    </location>
</feature>
<feature type="region of interest" description="Disordered" evidence="3">
    <location>
        <begin position="273"/>
        <end position="307"/>
    </location>
</feature>
<feature type="region of interest" description="CRAC domain">
    <location>
        <begin position="315"/>
        <end position="320"/>
    </location>
</feature>
<feature type="region of interest" description="CRAC domain">
    <location>
        <begin position="339"/>
        <end position="348"/>
    </location>
</feature>
<feature type="region of interest" description="Required for interaction with CYTH2" evidence="4">
    <location>
        <begin position="389"/>
        <end position="437"/>
    </location>
</feature>
<feature type="region of interest" description="Disordered" evidence="3">
    <location>
        <begin position="406"/>
        <end position="437"/>
    </location>
</feature>
<feature type="compositionally biased region" description="Acidic residues" evidence="3">
    <location>
        <begin position="151"/>
        <end position="162"/>
    </location>
</feature>
<feature type="compositionally biased region" description="Low complexity" evidence="3">
    <location>
        <begin position="172"/>
        <end position="200"/>
    </location>
</feature>
<feature type="compositionally biased region" description="Polar residues" evidence="3">
    <location>
        <begin position="201"/>
        <end position="214"/>
    </location>
</feature>
<feature type="compositionally biased region" description="Low complexity" evidence="3">
    <location>
        <begin position="273"/>
        <end position="283"/>
    </location>
</feature>
<feature type="compositionally biased region" description="Polar residues" evidence="3">
    <location>
        <begin position="427"/>
        <end position="437"/>
    </location>
</feature>
<feature type="modified residue" description="Phosphoserine" evidence="10">
    <location>
        <position position="411"/>
    </location>
</feature>
<feature type="splice variant" id="VSP_032682" description="In isoform IPCEF1-2." evidence="5 6 7">
    <original>L</original>
    <variation>LQ</variation>
    <location>
        <position position="12"/>
    </location>
</feature>
<feature type="sequence variant" id="VAR_042410" description="In dbSNP:rs1060390.">
    <original>S</original>
    <variation>P</variation>
    <location>
        <position position="194"/>
    </location>
</feature>
<feature type="sequence conflict" description="In Ref. 3; CAI46054." evidence="8" ref="3">
    <original>S</original>
    <variation>G</variation>
    <location>
        <position position="267"/>
    </location>
</feature>
<feature type="strand" evidence="11">
    <location>
        <begin position="44"/>
        <end position="50"/>
    </location>
</feature>
<feature type="strand" evidence="11">
    <location>
        <begin position="63"/>
        <end position="70"/>
    </location>
</feature>
<feature type="strand" evidence="11">
    <location>
        <begin position="73"/>
        <end position="79"/>
    </location>
</feature>
<feature type="strand" evidence="11">
    <location>
        <begin position="86"/>
        <end position="90"/>
    </location>
</feature>
<feature type="strand" evidence="11">
    <location>
        <begin position="95"/>
        <end position="98"/>
    </location>
</feature>
<feature type="strand" evidence="11">
    <location>
        <begin position="102"/>
        <end position="104"/>
    </location>
</feature>
<feature type="strand" evidence="11">
    <location>
        <begin position="107"/>
        <end position="111"/>
    </location>
</feature>
<feature type="strand" evidence="11">
    <location>
        <begin position="117"/>
        <end position="121"/>
    </location>
</feature>
<feature type="helix" evidence="11">
    <location>
        <begin position="125"/>
        <end position="138"/>
    </location>
</feature>
<comment type="function">
    <text evidence="1">Enhances the promotion of guanine-nucleotide exchange by PSCD2 on ARF6 in a concentration-dependent manner.</text>
</comment>
<comment type="subunit">
    <text evidence="1 4">Interacts with guanine-nucleotide exchange factors PSCD1, PSCD2, PSCD3 and PSCD4 (By similarity). Interacts (via C-terminus) with cytohesin-2 CYTH2 (PubMed:22085542).</text>
</comment>
<comment type="interaction">
    <interactant intactId="EBI-4401965">
        <id>Q8WWN9</id>
    </interactant>
    <interactant intactId="EBI-739624">
        <id>Q8NHQ1</id>
        <label>CEP70</label>
    </interactant>
    <organismsDiffer>false</organismsDiffer>
    <experiments>3</experiments>
</comment>
<comment type="interaction">
    <interactant intactId="EBI-4401965">
        <id>Q8WWN9</id>
    </interactant>
    <interactant intactId="EBI-997830">
        <id>Q15438</id>
        <label>CYTH1</label>
    </interactant>
    <organismsDiffer>false</organismsDiffer>
    <experiments>8</experiments>
</comment>
<comment type="interaction">
    <interactant intactId="EBI-4401965">
        <id>Q8WWN9</id>
    </interactant>
    <interactant intactId="EBI-448974">
        <id>Q99418</id>
        <label>CYTH2</label>
    </interactant>
    <organismsDiffer>false</organismsDiffer>
    <experiments>8</experiments>
</comment>
<comment type="interaction">
    <interactant intactId="EBI-4401965">
        <id>Q8WWN9</id>
    </interactant>
    <interactant intactId="EBI-11974015">
        <id>O43739-2</id>
        <label>CYTH3</label>
    </interactant>
    <organismsDiffer>false</organismsDiffer>
    <experiments>3</experiments>
</comment>
<comment type="interaction">
    <interactant intactId="EBI-4401965">
        <id>Q8WWN9</id>
    </interactant>
    <interactant intactId="EBI-11521003">
        <id>Q9UIA0</id>
        <label>CYTH4</label>
    </interactant>
    <organismsDiffer>false</organismsDiffer>
    <experiments>8</experiments>
</comment>
<comment type="subcellular location">
    <subcellularLocation>
        <location evidence="1">Cytoplasm</location>
    </subcellularLocation>
    <subcellularLocation>
        <location evidence="1">Cell membrane</location>
    </subcellularLocation>
    <text evidence="1">Translocated with PSCD2 to the plasma membrane upon epidermal growth factor (EGF) stimulation.</text>
</comment>
<comment type="alternative products">
    <event type="alternative splicing"/>
    <isoform>
        <id>Q8WWN9-1</id>
        <name>IPCEF1-1</name>
        <sequence type="displayed"/>
    </isoform>
    <isoform>
        <id>Q8WWN9-2</id>
        <name>IPCEF1-2</name>
        <sequence type="described" ref="VSP_032682"/>
    </isoform>
    <isoform>
        <id>G9CGD6-1</id>
        <name>CNK3-IPCEF1-1</name>
        <name>CNK3/IPCEF1 Long-1</name>
        <sequence type="external"/>
    </isoform>
    <isoform>
        <id>G9CGD6-2</id>
        <name>CNK3-IPCEF1-2</name>
        <name>CNK3/IPCEF1 Long-2</name>
        <sequence type="external"/>
    </isoform>
    <isoform>
        <id>G9CGD6-3</id>
        <name>CNK3-IPCEF1-3</name>
        <name>CNK3/IPCEF1 Short</name>
        <sequence type="external"/>
    </isoform>
</comment>
<comment type="caution">
    <text evidence="8">It is uncertain whether Met-1 or Met-29 is the initiator.</text>
</comment>
<dbReference type="EMBL" id="AJ310566">
    <property type="protein sequence ID" value="CAC83949.1"/>
    <property type="molecule type" value="mRNA"/>
</dbReference>
<dbReference type="EMBL" id="AK289917">
    <property type="protein sequence ID" value="BAF82606.1"/>
    <property type="molecule type" value="mRNA"/>
</dbReference>
<dbReference type="EMBL" id="BX647254">
    <property type="protein sequence ID" value="CAI46054.1"/>
    <property type="molecule type" value="mRNA"/>
</dbReference>
<dbReference type="EMBL" id="AL445220">
    <property type="status" value="NOT_ANNOTATED_CDS"/>
    <property type="molecule type" value="Genomic_DNA"/>
</dbReference>
<dbReference type="EMBL" id="AL033376">
    <property type="status" value="NOT_ANNOTATED_CDS"/>
    <property type="molecule type" value="Genomic_DNA"/>
</dbReference>
<dbReference type="EMBL" id="AL132774">
    <property type="status" value="NOT_ANNOTATED_CDS"/>
    <property type="molecule type" value="Genomic_DNA"/>
</dbReference>
<dbReference type="EMBL" id="KF510943">
    <property type="status" value="NOT_ANNOTATED_CDS"/>
    <property type="molecule type" value="Genomic_DNA"/>
</dbReference>
<dbReference type="EMBL" id="CH471051">
    <property type="protein sequence ID" value="EAW47701.1"/>
    <property type="molecule type" value="Genomic_DNA"/>
</dbReference>
<dbReference type="EMBL" id="CH471051">
    <property type="protein sequence ID" value="EAW47702.1"/>
    <property type="molecule type" value="Genomic_DNA"/>
</dbReference>
<dbReference type="EMBL" id="BC105015">
    <property type="protein sequence ID" value="AAI05016.1"/>
    <property type="molecule type" value="mRNA"/>
</dbReference>
<dbReference type="EMBL" id="BC105043">
    <property type="protein sequence ID" value="AAI05044.1"/>
    <property type="molecule type" value="mRNA"/>
</dbReference>
<dbReference type="EMBL" id="BC143623">
    <property type="protein sequence ID" value="AAI43624.1"/>
    <property type="molecule type" value="mRNA"/>
</dbReference>
<dbReference type="EMBL" id="BC143629">
    <property type="protein sequence ID" value="AAI43630.1"/>
    <property type="molecule type" value="mRNA"/>
</dbReference>
<dbReference type="EMBL" id="AB007863">
    <property type="protein sequence ID" value="BAA23699.1"/>
    <property type="molecule type" value="mRNA"/>
</dbReference>
<dbReference type="CCDS" id="CCDS47509.1">
    <molecule id="Q8WWN9-2"/>
</dbReference>
<dbReference type="CCDS" id="CCDS5245.1">
    <molecule id="Q8WWN9-1"/>
</dbReference>
<dbReference type="RefSeq" id="NP_001124171.1">
    <molecule id="Q8WWN9-2"/>
    <property type="nucleotide sequence ID" value="NM_001130699.2"/>
</dbReference>
<dbReference type="RefSeq" id="NP_001124172.1">
    <molecule id="Q8WWN9-2"/>
    <property type="nucleotide sequence ID" value="NM_001130700.2"/>
</dbReference>
<dbReference type="RefSeq" id="NP_001381728.1">
    <molecule id="Q8WWN9-2"/>
    <property type="nucleotide sequence ID" value="NM_001394799.1"/>
</dbReference>
<dbReference type="RefSeq" id="NP_001381729.1">
    <molecule id="Q8WWN9-2"/>
    <property type="nucleotide sequence ID" value="NM_001394800.1"/>
</dbReference>
<dbReference type="RefSeq" id="NP_001381730.1">
    <molecule id="Q8WWN9-2"/>
    <property type="nucleotide sequence ID" value="NM_001394801.1"/>
</dbReference>
<dbReference type="RefSeq" id="NP_001381731.1">
    <molecule id="Q8WWN9-1"/>
    <property type="nucleotide sequence ID" value="NM_001394802.1"/>
</dbReference>
<dbReference type="RefSeq" id="NP_056368.1">
    <molecule id="Q8WWN9-1"/>
    <property type="nucleotide sequence ID" value="NM_015553.3"/>
</dbReference>
<dbReference type="RefSeq" id="XP_005266976.1">
    <property type="nucleotide sequence ID" value="XM_005266919.4"/>
</dbReference>
<dbReference type="RefSeq" id="XP_005266978.1">
    <property type="nucleotide sequence ID" value="XM_005266921.4"/>
</dbReference>
<dbReference type="RefSeq" id="XP_005266980.1">
    <property type="nucleotide sequence ID" value="XM_005266923.3"/>
</dbReference>
<dbReference type="RefSeq" id="XP_011534044.1">
    <property type="nucleotide sequence ID" value="XM_011535742.2"/>
</dbReference>
<dbReference type="RefSeq" id="XP_016866206.1">
    <property type="nucleotide sequence ID" value="XM_017010717.1"/>
</dbReference>
<dbReference type="RefSeq" id="XP_016866207.1">
    <property type="nucleotide sequence ID" value="XM_017010718.1"/>
</dbReference>
<dbReference type="PDB" id="5MR1">
    <property type="method" value="X-ray"/>
    <property type="resolution" value="1.20 A"/>
    <property type="chains" value="A=42-142"/>
</dbReference>
<dbReference type="PDBsum" id="5MR1"/>
<dbReference type="SMR" id="Q8WWN9"/>
<dbReference type="BioGRID" id="117500">
    <property type="interactions" value="12"/>
</dbReference>
<dbReference type="FunCoup" id="Q8WWN9">
    <property type="interactions" value="326"/>
</dbReference>
<dbReference type="IntAct" id="Q8WWN9">
    <property type="interactions" value="9"/>
</dbReference>
<dbReference type="iPTMnet" id="Q8WWN9"/>
<dbReference type="PhosphoSitePlus" id="Q8WWN9"/>
<dbReference type="BioMuta" id="IPCEF1"/>
<dbReference type="DMDM" id="74751582"/>
<dbReference type="jPOST" id="Q8WWN9"/>
<dbReference type="MassIVE" id="Q8WWN9"/>
<dbReference type="PaxDb" id="9606-ENSP00000394751"/>
<dbReference type="PeptideAtlas" id="Q8WWN9"/>
<dbReference type="ProteomicsDB" id="32242"/>
<dbReference type="ProteomicsDB" id="74916">
    <molecule id="Q8WWN9-1"/>
</dbReference>
<dbReference type="ProteomicsDB" id="74917">
    <molecule id="Q8WWN9-2"/>
</dbReference>
<dbReference type="Antibodypedia" id="33399">
    <property type="antibodies" value="132 antibodies from 17 providers"/>
</dbReference>
<dbReference type="DNASU" id="26034"/>
<dbReference type="Ensembl" id="ENST00000265198.8">
    <molecule id="Q8WWN9-1"/>
    <property type="protein sequence ID" value="ENSP00000265198.4"/>
    <property type="gene ID" value="ENSG00000074706.14"/>
</dbReference>
<dbReference type="Ensembl" id="ENST00000367220.9">
    <molecule id="Q8WWN9-2"/>
    <property type="protein sequence ID" value="ENSP00000356189.4"/>
    <property type="gene ID" value="ENSG00000074706.14"/>
</dbReference>
<dbReference type="Ensembl" id="ENST00000422970.6">
    <molecule id="Q8WWN9-2"/>
    <property type="protein sequence ID" value="ENSP00000394751.2"/>
    <property type="gene ID" value="ENSG00000074706.14"/>
</dbReference>
<dbReference type="GeneID" id="26034"/>
<dbReference type="KEGG" id="hsa:26034"/>
<dbReference type="MANE-Select" id="ENST00000367220.9">
    <molecule id="Q8WWN9-2"/>
    <property type="protein sequence ID" value="ENSP00000356189.4"/>
    <property type="RefSeq nucleotide sequence ID" value="NM_001130700.2"/>
    <property type="RefSeq protein sequence ID" value="NP_001124172.1"/>
</dbReference>
<dbReference type="UCSC" id="uc003qpw.4">
    <molecule id="Q8WWN9-1"/>
    <property type="organism name" value="human"/>
</dbReference>
<dbReference type="UCSC" id="uc063skh.1">
    <property type="organism name" value="human"/>
</dbReference>
<dbReference type="AGR" id="HGNC:21204"/>
<dbReference type="CTD" id="26034"/>
<dbReference type="DisGeNET" id="26034"/>
<dbReference type="GeneCards" id="IPCEF1"/>
<dbReference type="HGNC" id="HGNC:21204">
    <property type="gene designation" value="IPCEF1"/>
</dbReference>
<dbReference type="HPA" id="ENSG00000074706">
    <property type="expression patterns" value="Group enriched (bone marrow, brain, lymphoid tissue, thyroid gland)"/>
</dbReference>
<dbReference type="MIM" id="619948">
    <property type="type" value="gene"/>
</dbReference>
<dbReference type="neXtProt" id="NX_Q8WWN9"/>
<dbReference type="OpenTargets" id="ENSG00000074706"/>
<dbReference type="PharmGKB" id="PA164721033"/>
<dbReference type="VEuPathDB" id="HostDB:ENSG00000074706"/>
<dbReference type="eggNOG" id="KOG1738">
    <property type="taxonomic scope" value="Eukaryota"/>
</dbReference>
<dbReference type="GeneTree" id="ENSGT00940000154428"/>
<dbReference type="InParanoid" id="Q8WWN9"/>
<dbReference type="OMA" id="ENSFAMS"/>
<dbReference type="OrthoDB" id="74412at2759"/>
<dbReference type="PAN-GO" id="Q8WWN9">
    <property type="GO annotations" value="0 GO annotations based on evolutionary models"/>
</dbReference>
<dbReference type="PhylomeDB" id="Q8WWN9"/>
<dbReference type="TreeFam" id="TF326495"/>
<dbReference type="PathwayCommons" id="Q8WWN9"/>
<dbReference type="SignaLink" id="Q8WWN9"/>
<dbReference type="BioGRID-ORCS" id="26034">
    <property type="hits" value="17 hits in 1137 CRISPR screens"/>
</dbReference>
<dbReference type="ChiTaRS" id="IPCEF1">
    <property type="organism name" value="human"/>
</dbReference>
<dbReference type="GenomeRNAi" id="26034"/>
<dbReference type="Pharos" id="Q8WWN9">
    <property type="development level" value="Tbio"/>
</dbReference>
<dbReference type="PRO" id="PR:Q8WWN9"/>
<dbReference type="Proteomes" id="UP000005640">
    <property type="component" value="Chromosome 6"/>
</dbReference>
<dbReference type="RNAct" id="Q8WWN9">
    <property type="molecule type" value="protein"/>
</dbReference>
<dbReference type="Bgee" id="ENSG00000074706">
    <property type="expression patterns" value="Expressed in endothelial cell and 150 other cell types or tissues"/>
</dbReference>
<dbReference type="ExpressionAtlas" id="Q8WWN9">
    <property type="expression patterns" value="baseline and differential"/>
</dbReference>
<dbReference type="GO" id="GO:0005737">
    <property type="term" value="C:cytoplasm"/>
    <property type="evidence" value="ECO:0007669"/>
    <property type="project" value="UniProtKB-SubCell"/>
</dbReference>
<dbReference type="GO" id="GO:0005886">
    <property type="term" value="C:plasma membrane"/>
    <property type="evidence" value="ECO:0007669"/>
    <property type="project" value="UniProtKB-SubCell"/>
</dbReference>
<dbReference type="GO" id="GO:0005344">
    <property type="term" value="F:oxygen carrier activity"/>
    <property type="evidence" value="ECO:0000303"/>
    <property type="project" value="UniProtKB"/>
</dbReference>
<dbReference type="GO" id="GO:0004601">
    <property type="term" value="F:peroxidase activity"/>
    <property type="evidence" value="ECO:0000250"/>
    <property type="project" value="UniProtKB"/>
</dbReference>
<dbReference type="GO" id="GO:0015671">
    <property type="term" value="P:oxygen transport"/>
    <property type="evidence" value="ECO:0000303"/>
    <property type="project" value="UniProtKB"/>
</dbReference>
<dbReference type="GO" id="GO:0006979">
    <property type="term" value="P:response to oxidative stress"/>
    <property type="evidence" value="ECO:0000250"/>
    <property type="project" value="UniProtKB"/>
</dbReference>
<dbReference type="CDD" id="cd01260">
    <property type="entry name" value="PH_CNK_mammalian-like"/>
    <property type="match status" value="1"/>
</dbReference>
<dbReference type="FunFam" id="2.30.29.30:FF:000092">
    <property type="entry name" value="Connector enhancer of kinase suppressor of Ras 2"/>
    <property type="match status" value="1"/>
</dbReference>
<dbReference type="Gene3D" id="2.30.29.30">
    <property type="entry name" value="Pleckstrin-homology domain (PH domain)/Phosphotyrosine-binding domain (PTB)"/>
    <property type="match status" value="1"/>
</dbReference>
<dbReference type="InterPro" id="IPR051566">
    <property type="entry name" value="CNKSR"/>
</dbReference>
<dbReference type="InterPro" id="IPR011993">
    <property type="entry name" value="PH-like_dom_sf"/>
</dbReference>
<dbReference type="InterPro" id="IPR001849">
    <property type="entry name" value="PH_domain"/>
</dbReference>
<dbReference type="PANTHER" id="PTHR12844:SF45">
    <property type="entry name" value="CNK3_IPCEF1 FUSION PROTEIN-RELATED"/>
    <property type="match status" value="1"/>
</dbReference>
<dbReference type="PANTHER" id="PTHR12844">
    <property type="entry name" value="CONNECTOR ENCHANCER OF KINASE SUPPRESSOR OF RAS"/>
    <property type="match status" value="1"/>
</dbReference>
<dbReference type="Pfam" id="PF00169">
    <property type="entry name" value="PH"/>
    <property type="match status" value="1"/>
</dbReference>
<dbReference type="SMART" id="SM00233">
    <property type="entry name" value="PH"/>
    <property type="match status" value="1"/>
</dbReference>
<dbReference type="SUPFAM" id="SSF50729">
    <property type="entry name" value="PH domain-like"/>
    <property type="match status" value="1"/>
</dbReference>
<dbReference type="PROSITE" id="PS50003">
    <property type="entry name" value="PH_DOMAIN"/>
    <property type="match status" value="1"/>
</dbReference>
<protein>
    <recommendedName>
        <fullName>Interactor protein for cytohesin exchange factors 1</fullName>
    </recommendedName>
    <alternativeName>
        <fullName>Phosphoinositide-binding protein PIP3-E</fullName>
    </alternativeName>
</protein>
<evidence type="ECO:0000250" key="1"/>
<evidence type="ECO:0000255" key="2">
    <source>
        <dbReference type="PROSITE-ProRule" id="PRU00145"/>
    </source>
</evidence>
<evidence type="ECO:0000256" key="3">
    <source>
        <dbReference type="SAM" id="MobiDB-lite"/>
    </source>
</evidence>
<evidence type="ECO:0000269" key="4">
    <source>
    </source>
</evidence>
<evidence type="ECO:0000303" key="5">
    <source>
    </source>
</evidence>
<evidence type="ECO:0000303" key="6">
    <source>
    </source>
</evidence>
<evidence type="ECO:0000303" key="7">
    <source>
    </source>
</evidence>
<evidence type="ECO:0000305" key="8"/>
<evidence type="ECO:0007744" key="9">
    <source>
        <dbReference type="PDB" id="5MR1"/>
    </source>
</evidence>
<evidence type="ECO:0007744" key="10">
    <source>
    </source>
</evidence>
<evidence type="ECO:0007829" key="11">
    <source>
        <dbReference type="PDB" id="5MR1"/>
    </source>
</evidence>
<name>ICEF1_HUMAN</name>
<organism>
    <name type="scientific">Homo sapiens</name>
    <name type="common">Human</name>
    <dbReference type="NCBI Taxonomy" id="9606"/>
    <lineage>
        <taxon>Eukaryota</taxon>
        <taxon>Metazoa</taxon>
        <taxon>Chordata</taxon>
        <taxon>Craniata</taxon>
        <taxon>Vertebrata</taxon>
        <taxon>Euteleostomi</taxon>
        <taxon>Mammalia</taxon>
        <taxon>Eutheria</taxon>
        <taxon>Euarchontoglires</taxon>
        <taxon>Primates</taxon>
        <taxon>Haplorrhini</taxon>
        <taxon>Catarrhini</taxon>
        <taxon>Hominidae</taxon>
        <taxon>Homo</taxon>
    </lineage>
</organism>
<gene>
    <name type="primary">IPCEF1</name>
    <name type="synonym">KIAA0403</name>
</gene>
<reference key="1">
    <citation type="journal article" date="2002" name="Mol. Cell">
        <title>Identification of ARAP3, a novel PI3K effector regulating both Arf and Rho GTPases, by selective capture on phosphoinositide affinity matrices.</title>
        <authorList>
            <person name="Krugmann S."/>
            <person name="Anderson K.E."/>
            <person name="Ridley S.H."/>
            <person name="Risso N."/>
            <person name="McGregor A."/>
            <person name="Coadwell J."/>
            <person name="Davidson K."/>
            <person name="Eguinoa A."/>
            <person name="Ellson C.D."/>
            <person name="Lipp P."/>
            <person name="Manifava M."/>
            <person name="Ktistakis N."/>
            <person name="Painter G."/>
            <person name="Thuring J.W."/>
            <person name="Cooper M.A."/>
            <person name="Lim Z.-Y."/>
            <person name="Holmes A.B."/>
            <person name="Dove S.K."/>
            <person name="Michell R.H."/>
            <person name="Grewal A."/>
            <person name="Nazarian A."/>
            <person name="Erdjument-Bromage H."/>
            <person name="Tempst P."/>
            <person name="Stephens L.R."/>
            <person name="Hawkins P.T."/>
        </authorList>
    </citation>
    <scope>NUCLEOTIDE SEQUENCE [MRNA] (ISOFORM IPCEF1-1)</scope>
    <scope>INTERACTION WITH PHOSPHATIDYLINOSITOL 3-PHOSPHATE</scope>
</reference>
<reference key="2">
    <citation type="journal article" date="2004" name="Nat. Genet.">
        <title>Complete sequencing and characterization of 21,243 full-length human cDNAs.</title>
        <authorList>
            <person name="Ota T."/>
            <person name="Suzuki Y."/>
            <person name="Nishikawa T."/>
            <person name="Otsuki T."/>
            <person name="Sugiyama T."/>
            <person name="Irie R."/>
            <person name="Wakamatsu A."/>
            <person name="Hayashi K."/>
            <person name="Sato H."/>
            <person name="Nagai K."/>
            <person name="Kimura K."/>
            <person name="Makita H."/>
            <person name="Sekine M."/>
            <person name="Obayashi M."/>
            <person name="Nishi T."/>
            <person name="Shibahara T."/>
            <person name="Tanaka T."/>
            <person name="Ishii S."/>
            <person name="Yamamoto J."/>
            <person name="Saito K."/>
            <person name="Kawai Y."/>
            <person name="Isono Y."/>
            <person name="Nakamura Y."/>
            <person name="Nagahari K."/>
            <person name="Murakami K."/>
            <person name="Yasuda T."/>
            <person name="Iwayanagi T."/>
            <person name="Wagatsuma M."/>
            <person name="Shiratori A."/>
            <person name="Sudo H."/>
            <person name="Hosoiri T."/>
            <person name="Kaku Y."/>
            <person name="Kodaira H."/>
            <person name="Kondo H."/>
            <person name="Sugawara M."/>
            <person name="Takahashi M."/>
            <person name="Kanda K."/>
            <person name="Yokoi T."/>
            <person name="Furuya T."/>
            <person name="Kikkawa E."/>
            <person name="Omura Y."/>
            <person name="Abe K."/>
            <person name="Kamihara K."/>
            <person name="Katsuta N."/>
            <person name="Sato K."/>
            <person name="Tanikawa M."/>
            <person name="Yamazaki M."/>
            <person name="Ninomiya K."/>
            <person name="Ishibashi T."/>
            <person name="Yamashita H."/>
            <person name="Murakawa K."/>
            <person name="Fujimori K."/>
            <person name="Tanai H."/>
            <person name="Kimata M."/>
            <person name="Watanabe M."/>
            <person name="Hiraoka S."/>
            <person name="Chiba Y."/>
            <person name="Ishida S."/>
            <person name="Ono Y."/>
            <person name="Takiguchi S."/>
            <person name="Watanabe S."/>
            <person name="Yosida M."/>
            <person name="Hotuta T."/>
            <person name="Kusano J."/>
            <person name="Kanehori K."/>
            <person name="Takahashi-Fujii A."/>
            <person name="Hara H."/>
            <person name="Tanase T.-O."/>
            <person name="Nomura Y."/>
            <person name="Togiya S."/>
            <person name="Komai F."/>
            <person name="Hara R."/>
            <person name="Takeuchi K."/>
            <person name="Arita M."/>
            <person name="Imose N."/>
            <person name="Musashino K."/>
            <person name="Yuuki H."/>
            <person name="Oshima A."/>
            <person name="Sasaki N."/>
            <person name="Aotsuka S."/>
            <person name="Yoshikawa Y."/>
            <person name="Matsunawa H."/>
            <person name="Ichihara T."/>
            <person name="Shiohata N."/>
            <person name="Sano S."/>
            <person name="Moriya S."/>
            <person name="Momiyama H."/>
            <person name="Satoh N."/>
            <person name="Takami S."/>
            <person name="Terashima Y."/>
            <person name="Suzuki O."/>
            <person name="Nakagawa S."/>
            <person name="Senoh A."/>
            <person name="Mizoguchi H."/>
            <person name="Goto Y."/>
            <person name="Shimizu F."/>
            <person name="Wakebe H."/>
            <person name="Hishigaki H."/>
            <person name="Watanabe T."/>
            <person name="Sugiyama A."/>
            <person name="Takemoto M."/>
            <person name="Kawakami B."/>
            <person name="Yamazaki M."/>
            <person name="Watanabe K."/>
            <person name="Kumagai A."/>
            <person name="Itakura S."/>
            <person name="Fukuzumi Y."/>
            <person name="Fujimori Y."/>
            <person name="Komiyama M."/>
            <person name="Tashiro H."/>
            <person name="Tanigami A."/>
            <person name="Fujiwara T."/>
            <person name="Ono T."/>
            <person name="Yamada K."/>
            <person name="Fujii Y."/>
            <person name="Ozaki K."/>
            <person name="Hirao M."/>
            <person name="Ohmori Y."/>
            <person name="Kawabata A."/>
            <person name="Hikiji T."/>
            <person name="Kobatake N."/>
            <person name="Inagaki H."/>
            <person name="Ikema Y."/>
            <person name="Okamoto S."/>
            <person name="Okitani R."/>
            <person name="Kawakami T."/>
            <person name="Noguchi S."/>
            <person name="Itoh T."/>
            <person name="Shigeta K."/>
            <person name="Senba T."/>
            <person name="Matsumura K."/>
            <person name="Nakajima Y."/>
            <person name="Mizuno T."/>
            <person name="Morinaga M."/>
            <person name="Sasaki M."/>
            <person name="Togashi T."/>
            <person name="Oyama M."/>
            <person name="Hata H."/>
            <person name="Watanabe M."/>
            <person name="Komatsu T."/>
            <person name="Mizushima-Sugano J."/>
            <person name="Satoh T."/>
            <person name="Shirai Y."/>
            <person name="Takahashi Y."/>
            <person name="Nakagawa K."/>
            <person name="Okumura K."/>
            <person name="Nagase T."/>
            <person name="Nomura N."/>
            <person name="Kikuchi H."/>
            <person name="Masuho Y."/>
            <person name="Yamashita R."/>
            <person name="Nakai K."/>
            <person name="Yada T."/>
            <person name="Nakamura Y."/>
            <person name="Ohara O."/>
            <person name="Isogai T."/>
            <person name="Sugano S."/>
        </authorList>
    </citation>
    <scope>NUCLEOTIDE SEQUENCE [LARGE SCALE MRNA] (ISOFORM IPCEF1-2)</scope>
    <source>
        <tissue>Corpus callosum</tissue>
    </source>
</reference>
<reference key="3">
    <citation type="journal article" date="2007" name="BMC Genomics">
        <title>The full-ORF clone resource of the German cDNA consortium.</title>
        <authorList>
            <person name="Bechtel S."/>
            <person name="Rosenfelder H."/>
            <person name="Duda A."/>
            <person name="Schmidt C.P."/>
            <person name="Ernst U."/>
            <person name="Wellenreuther R."/>
            <person name="Mehrle A."/>
            <person name="Schuster C."/>
            <person name="Bahr A."/>
            <person name="Bloecker H."/>
            <person name="Heubner D."/>
            <person name="Hoerlein A."/>
            <person name="Michel G."/>
            <person name="Wedler H."/>
            <person name="Koehrer K."/>
            <person name="Ottenwaelder B."/>
            <person name="Poustka A."/>
            <person name="Wiemann S."/>
            <person name="Schupp I."/>
        </authorList>
    </citation>
    <scope>NUCLEOTIDE SEQUENCE [LARGE SCALE MRNA] (ISOFORM IPCEF1-2)</scope>
    <source>
        <tissue>Endometrium</tissue>
    </source>
</reference>
<reference key="4">
    <citation type="journal article" date="2003" name="Nature">
        <title>The DNA sequence and analysis of human chromosome 6.</title>
        <authorList>
            <person name="Mungall A.J."/>
            <person name="Palmer S.A."/>
            <person name="Sims S.K."/>
            <person name="Edwards C.A."/>
            <person name="Ashurst J.L."/>
            <person name="Wilming L."/>
            <person name="Jones M.C."/>
            <person name="Horton R."/>
            <person name="Hunt S.E."/>
            <person name="Scott C.E."/>
            <person name="Gilbert J.G.R."/>
            <person name="Clamp M.E."/>
            <person name="Bethel G."/>
            <person name="Milne S."/>
            <person name="Ainscough R."/>
            <person name="Almeida J.P."/>
            <person name="Ambrose K.D."/>
            <person name="Andrews T.D."/>
            <person name="Ashwell R.I.S."/>
            <person name="Babbage A.K."/>
            <person name="Bagguley C.L."/>
            <person name="Bailey J."/>
            <person name="Banerjee R."/>
            <person name="Barker D.J."/>
            <person name="Barlow K.F."/>
            <person name="Bates K."/>
            <person name="Beare D.M."/>
            <person name="Beasley H."/>
            <person name="Beasley O."/>
            <person name="Bird C.P."/>
            <person name="Blakey S.E."/>
            <person name="Bray-Allen S."/>
            <person name="Brook J."/>
            <person name="Brown A.J."/>
            <person name="Brown J.Y."/>
            <person name="Burford D.C."/>
            <person name="Burrill W."/>
            <person name="Burton J."/>
            <person name="Carder C."/>
            <person name="Carter N.P."/>
            <person name="Chapman J.C."/>
            <person name="Clark S.Y."/>
            <person name="Clark G."/>
            <person name="Clee C.M."/>
            <person name="Clegg S."/>
            <person name="Cobley V."/>
            <person name="Collier R.E."/>
            <person name="Collins J.E."/>
            <person name="Colman L.K."/>
            <person name="Corby N.R."/>
            <person name="Coville G.J."/>
            <person name="Culley K.M."/>
            <person name="Dhami P."/>
            <person name="Davies J."/>
            <person name="Dunn M."/>
            <person name="Earthrowl M.E."/>
            <person name="Ellington A.E."/>
            <person name="Evans K.A."/>
            <person name="Faulkner L."/>
            <person name="Francis M.D."/>
            <person name="Frankish A."/>
            <person name="Frankland J."/>
            <person name="French L."/>
            <person name="Garner P."/>
            <person name="Garnett J."/>
            <person name="Ghori M.J."/>
            <person name="Gilby L.M."/>
            <person name="Gillson C.J."/>
            <person name="Glithero R.J."/>
            <person name="Grafham D.V."/>
            <person name="Grant M."/>
            <person name="Gribble S."/>
            <person name="Griffiths C."/>
            <person name="Griffiths M.N.D."/>
            <person name="Hall R."/>
            <person name="Halls K.S."/>
            <person name="Hammond S."/>
            <person name="Harley J.L."/>
            <person name="Hart E.A."/>
            <person name="Heath P.D."/>
            <person name="Heathcott R."/>
            <person name="Holmes S.J."/>
            <person name="Howden P.J."/>
            <person name="Howe K.L."/>
            <person name="Howell G.R."/>
            <person name="Huckle E."/>
            <person name="Humphray S.J."/>
            <person name="Humphries M.D."/>
            <person name="Hunt A.R."/>
            <person name="Johnson C.M."/>
            <person name="Joy A.A."/>
            <person name="Kay M."/>
            <person name="Keenan S.J."/>
            <person name="Kimberley A.M."/>
            <person name="King A."/>
            <person name="Laird G.K."/>
            <person name="Langford C."/>
            <person name="Lawlor S."/>
            <person name="Leongamornlert D.A."/>
            <person name="Leversha M."/>
            <person name="Lloyd C.R."/>
            <person name="Lloyd D.M."/>
            <person name="Loveland J.E."/>
            <person name="Lovell J."/>
            <person name="Martin S."/>
            <person name="Mashreghi-Mohammadi M."/>
            <person name="Maslen G.L."/>
            <person name="Matthews L."/>
            <person name="McCann O.T."/>
            <person name="McLaren S.J."/>
            <person name="McLay K."/>
            <person name="McMurray A."/>
            <person name="Moore M.J.F."/>
            <person name="Mullikin J.C."/>
            <person name="Niblett D."/>
            <person name="Nickerson T."/>
            <person name="Novik K.L."/>
            <person name="Oliver K."/>
            <person name="Overton-Larty E.K."/>
            <person name="Parker A."/>
            <person name="Patel R."/>
            <person name="Pearce A.V."/>
            <person name="Peck A.I."/>
            <person name="Phillimore B.J.C.T."/>
            <person name="Phillips S."/>
            <person name="Plumb R.W."/>
            <person name="Porter K.M."/>
            <person name="Ramsey Y."/>
            <person name="Ranby S.A."/>
            <person name="Rice C.M."/>
            <person name="Ross M.T."/>
            <person name="Searle S.M."/>
            <person name="Sehra H.K."/>
            <person name="Sheridan E."/>
            <person name="Skuce C.D."/>
            <person name="Smith S."/>
            <person name="Smith M."/>
            <person name="Spraggon L."/>
            <person name="Squares S.L."/>
            <person name="Steward C.A."/>
            <person name="Sycamore N."/>
            <person name="Tamlyn-Hall G."/>
            <person name="Tester J."/>
            <person name="Theaker A.J."/>
            <person name="Thomas D.W."/>
            <person name="Thorpe A."/>
            <person name="Tracey A."/>
            <person name="Tromans A."/>
            <person name="Tubby B."/>
            <person name="Wall M."/>
            <person name="Wallis J.M."/>
            <person name="West A.P."/>
            <person name="White S.S."/>
            <person name="Whitehead S.L."/>
            <person name="Whittaker H."/>
            <person name="Wild A."/>
            <person name="Willey D.J."/>
            <person name="Wilmer T.E."/>
            <person name="Wood J.M."/>
            <person name="Wray P.W."/>
            <person name="Wyatt J.C."/>
            <person name="Young L."/>
            <person name="Younger R.M."/>
            <person name="Bentley D.R."/>
            <person name="Coulson A."/>
            <person name="Durbin R.M."/>
            <person name="Hubbard T."/>
            <person name="Sulston J.E."/>
            <person name="Dunham I."/>
            <person name="Rogers J."/>
            <person name="Beck S."/>
        </authorList>
    </citation>
    <scope>NUCLEOTIDE SEQUENCE [LARGE SCALE GENOMIC DNA]</scope>
</reference>
<reference key="5">
    <citation type="submission" date="2005-09" db="EMBL/GenBank/DDBJ databases">
        <authorList>
            <person name="Mural R.J."/>
            <person name="Istrail S."/>
            <person name="Sutton G.G."/>
            <person name="Florea L."/>
            <person name="Halpern A.L."/>
            <person name="Mobarry C.M."/>
            <person name="Lippert R."/>
            <person name="Walenz B."/>
            <person name="Shatkay H."/>
            <person name="Dew I."/>
            <person name="Miller J.R."/>
            <person name="Flanigan M.J."/>
            <person name="Edwards N.J."/>
            <person name="Bolanos R."/>
            <person name="Fasulo D."/>
            <person name="Halldorsson B.V."/>
            <person name="Hannenhalli S."/>
            <person name="Turner R."/>
            <person name="Yooseph S."/>
            <person name="Lu F."/>
            <person name="Nusskern D.R."/>
            <person name="Shue B.C."/>
            <person name="Zheng X.H."/>
            <person name="Zhong F."/>
            <person name="Delcher A.L."/>
            <person name="Huson D.H."/>
            <person name="Kravitz S.A."/>
            <person name="Mouchard L."/>
            <person name="Reinert K."/>
            <person name="Remington K.A."/>
            <person name="Clark A.G."/>
            <person name="Waterman M.S."/>
            <person name="Eichler E.E."/>
            <person name="Adams M.D."/>
            <person name="Hunkapiller M.W."/>
            <person name="Myers E.W."/>
            <person name="Venter J.C."/>
        </authorList>
    </citation>
    <scope>NUCLEOTIDE SEQUENCE [LARGE SCALE GENOMIC DNA]</scope>
</reference>
<reference key="6">
    <citation type="journal article" date="2004" name="Genome Res.">
        <title>The status, quality, and expansion of the NIH full-length cDNA project: the Mammalian Gene Collection (MGC).</title>
        <authorList>
            <consortium name="The MGC Project Team"/>
        </authorList>
    </citation>
    <scope>NUCLEOTIDE SEQUENCE [LARGE SCALE MRNA] (ISOFORMS IPCEF1-1 AND IPCEF1-2)</scope>
    <source>
        <tissue>Brain</tissue>
    </source>
</reference>
<reference key="7">
    <citation type="journal article" date="1997" name="DNA Res.">
        <title>Prediction of the coding sequences of unidentified human genes. VIII. 78 new cDNA clones from brain which code for large proteins in vitro.</title>
        <authorList>
            <person name="Ishikawa K."/>
            <person name="Nagase T."/>
            <person name="Nakajima D."/>
            <person name="Seki N."/>
            <person name="Ohira M."/>
            <person name="Miyajima N."/>
            <person name="Tanaka A."/>
            <person name="Kotani H."/>
            <person name="Nomura N."/>
            <person name="Ohara O."/>
        </authorList>
    </citation>
    <scope>NUCLEOTIDE SEQUENCE [LARGE SCALE MRNA] OF 22-437</scope>
    <source>
        <tissue>Brain</tissue>
    </source>
</reference>
<reference key="8">
    <citation type="journal article" date="2012" name="Exp. Cell Res.">
        <title>CNK3 and IPCEF1 produce a single protein that is required for HGF dependent Arf6 activation and migration.</title>
        <authorList>
            <person name="Attar M.A."/>
            <person name="Salem J.C."/>
            <person name="Pursel H.S."/>
            <person name="Santy L.C."/>
        </authorList>
    </citation>
    <scope>ALTERNATIVE SPLICING</scope>
    <scope>INTERACTION WITH CYTH2</scope>
</reference>
<reference key="9">
    <citation type="journal article" date="2014" name="J. Proteomics">
        <title>An enzyme assisted RP-RPLC approach for in-depth analysis of human liver phosphoproteome.</title>
        <authorList>
            <person name="Bian Y."/>
            <person name="Song C."/>
            <person name="Cheng K."/>
            <person name="Dong M."/>
            <person name="Wang F."/>
            <person name="Huang J."/>
            <person name="Sun D."/>
            <person name="Wang L."/>
            <person name="Ye M."/>
            <person name="Zou H."/>
        </authorList>
    </citation>
    <scope>PHOSPHORYLATION [LARGE SCALE ANALYSIS] AT SER-411</scope>
    <scope>IDENTIFICATION BY MASS SPECTROMETRY [LARGE SCALE ANALYSIS]</scope>
    <source>
        <tissue>Liver</tissue>
    </source>
</reference>
<reference evidence="9" key="10">
    <citation type="submission" date="2016-12" db="PDB data bank">
        <title>Crystal structure of the pleckstrin homology domain of interactor protein for cytohesin exchange factors 1 (IPCEF1).</title>
        <authorList>
            <person name="Newman J.A."/>
            <person name="Aitkenhead H."/>
            <person name="Wang D."/>
            <person name="Burgess-Brown N."/>
            <person name="Williams E."/>
            <person name="von-Delft F."/>
            <person name="Arrowsmith C.H."/>
            <person name="Edwards A."/>
            <person name="Bountra C."/>
            <person name="Gileadi O."/>
        </authorList>
    </citation>
    <scope>X-RAY CRYSTALLOGRAPHY (1.20 ANGSTROMS) OF 42-142</scope>
</reference>
<keyword id="KW-0002">3D-structure</keyword>
<keyword id="KW-0025">Alternative splicing</keyword>
<keyword id="KW-1003">Cell membrane</keyword>
<keyword id="KW-0963">Cytoplasm</keyword>
<keyword id="KW-0472">Membrane</keyword>
<keyword id="KW-0597">Phosphoprotein</keyword>
<keyword id="KW-1185">Reference proteome</keyword>
<accession>Q8WWN9</accession>
<accession>A8K1K2</accession>
<accession>B7ZL78</accession>
<accession>B7ZL80</accession>
<accession>G3V132</accession>
<accession>O43153</accession>
<accession>Q5HYL8</accession>
<sequence length="437" mass="48993">MTSYMAIDGSALVPLRQKPRRKTQGFLTMSRRRISCKDLGHADCQGWLYKKKEKGSFLSNKWKKFWVILKGSSLYWYSNQMAEKADGFVNLPDFTVERASECKKKHAFKISHPQIKTFYFAAENVQEMNVWLNKLGSAVIHQESTTKDEECYSESEQEDPEIAAETPPPPHASQTQSLTAQQASSSSPSLSGTSYSFSSLENTVKTPSSFPSSLSKERQSLPDTVNSLSAAEDEGQPITFAVQVHSPVPSEAGIHKALENSFVTSESGFLNSLSSDDTSSLSSNHDHLTVPDKPAGSKIMDKEETKVSEDDEMEKLYKSLEQASLSPLGDRRPSTKKELRKSFVKRCKNPSINEKLHKIRTLNSTLKCKEHDLAMINQLLDDPKLTARKYREWKVMNTLLIQDIYQQQRASPAPDDTDDTPQELKKSPSSPSVENSI</sequence>
<proteinExistence type="evidence at protein level"/>